<reference key="1">
    <citation type="journal article" date="2009" name="Vaccine">
        <title>Whole genome sequence analysis of Mycobacterium bovis bacillus Calmette-Guerin (BCG) Tokyo 172: a comparative study of BCG vaccine substrains.</title>
        <authorList>
            <person name="Seki M."/>
            <person name="Honda I."/>
            <person name="Fujita I."/>
            <person name="Yano I."/>
            <person name="Yamamoto S."/>
            <person name="Koyama A."/>
        </authorList>
    </citation>
    <scope>NUCLEOTIDE SEQUENCE [LARGE SCALE GENOMIC DNA]</scope>
    <source>
        <strain>BCG / Tokyo 172 / ATCC 35737 / TMC 1019</strain>
    </source>
</reference>
<comment type="function">
    <text evidence="1">Specifically methylates guanosine-37 in various tRNAs.</text>
</comment>
<comment type="catalytic activity">
    <reaction evidence="1">
        <text>guanosine(37) in tRNA + S-adenosyl-L-methionine = N(1)-methylguanosine(37) in tRNA + S-adenosyl-L-homocysteine + H(+)</text>
        <dbReference type="Rhea" id="RHEA:36899"/>
        <dbReference type="Rhea" id="RHEA-COMP:10145"/>
        <dbReference type="Rhea" id="RHEA-COMP:10147"/>
        <dbReference type="ChEBI" id="CHEBI:15378"/>
        <dbReference type="ChEBI" id="CHEBI:57856"/>
        <dbReference type="ChEBI" id="CHEBI:59789"/>
        <dbReference type="ChEBI" id="CHEBI:73542"/>
        <dbReference type="ChEBI" id="CHEBI:74269"/>
        <dbReference type="EC" id="2.1.1.228"/>
    </reaction>
</comment>
<comment type="subunit">
    <text evidence="1">Homodimer.</text>
</comment>
<comment type="subcellular location">
    <subcellularLocation>
        <location evidence="1">Cytoplasm</location>
    </subcellularLocation>
</comment>
<comment type="similarity">
    <text evidence="1">Belongs to the RNA methyltransferase TrmD family.</text>
</comment>
<evidence type="ECO:0000255" key="1">
    <source>
        <dbReference type="HAMAP-Rule" id="MF_00605"/>
    </source>
</evidence>
<feature type="chain" id="PRO_1000198578" description="tRNA (guanine-N(1)-)-methyltransferase">
    <location>
        <begin position="1"/>
        <end position="230"/>
    </location>
</feature>
<feature type="binding site" evidence="1">
    <location>
        <position position="109"/>
    </location>
    <ligand>
        <name>S-adenosyl-L-methionine</name>
        <dbReference type="ChEBI" id="CHEBI:59789"/>
    </ligand>
</feature>
<feature type="binding site" evidence="1">
    <location>
        <begin position="133"/>
        <end position="138"/>
    </location>
    <ligand>
        <name>S-adenosyl-L-methionine</name>
        <dbReference type="ChEBI" id="CHEBI:59789"/>
    </ligand>
</feature>
<accession>C1AG21</accession>
<keyword id="KW-0963">Cytoplasm</keyword>
<keyword id="KW-0489">Methyltransferase</keyword>
<keyword id="KW-0949">S-adenosyl-L-methionine</keyword>
<keyword id="KW-0808">Transferase</keyword>
<keyword id="KW-0819">tRNA processing</keyword>
<sequence length="230" mass="25166">MRIDIVTIFPACLDPLRQSLPGKAIESGLVDLNVHDLRRWTHDVHHSVDDAPYGGGPGMVMKAPVWGEALDEICSSETLLIVPTPAGVLFTQATAQRWTTESHLVFACGRYEGIDQRVVQDAARRMRVEEVSIGDYVLPGGESAAVVMVEAVLRLLAGVLGNPASHQDDSHSTGLDGLLEGPSYTRPASWRGLDVPEVLLSGDHARIAAWRREVSLQRTRERRPDLSHPD</sequence>
<protein>
    <recommendedName>
        <fullName evidence="1">tRNA (guanine-N(1)-)-methyltransferase</fullName>
        <ecNumber evidence="1">2.1.1.228</ecNumber>
    </recommendedName>
    <alternativeName>
        <fullName evidence="1">M1G-methyltransferase</fullName>
    </alternativeName>
    <alternativeName>
        <fullName evidence="1">tRNA [GM37] methyltransferase</fullName>
    </alternativeName>
</protein>
<proteinExistence type="inferred from homology"/>
<organism>
    <name type="scientific">Mycobacterium bovis (strain BCG / Tokyo 172 / ATCC 35737 / TMC 1019)</name>
    <dbReference type="NCBI Taxonomy" id="561275"/>
    <lineage>
        <taxon>Bacteria</taxon>
        <taxon>Bacillati</taxon>
        <taxon>Actinomycetota</taxon>
        <taxon>Actinomycetes</taxon>
        <taxon>Mycobacteriales</taxon>
        <taxon>Mycobacteriaceae</taxon>
        <taxon>Mycobacterium</taxon>
        <taxon>Mycobacterium tuberculosis complex</taxon>
    </lineage>
</organism>
<name>TRMD_MYCBT</name>
<gene>
    <name evidence="1" type="primary">trmD</name>
    <name type="ordered locus">JTY_2922</name>
</gene>
<dbReference type="EC" id="2.1.1.228" evidence="1"/>
<dbReference type="EMBL" id="AP010918">
    <property type="protein sequence ID" value="BAH27200.1"/>
    <property type="molecule type" value="Genomic_DNA"/>
</dbReference>
<dbReference type="RefSeq" id="WP_003414722.1">
    <property type="nucleotide sequence ID" value="NZ_CP014566.1"/>
</dbReference>
<dbReference type="SMR" id="C1AG21"/>
<dbReference type="KEGG" id="mbt:JTY_2922"/>
<dbReference type="HOGENOM" id="CLU_047363_0_0_11"/>
<dbReference type="GO" id="GO:0005829">
    <property type="term" value="C:cytosol"/>
    <property type="evidence" value="ECO:0007669"/>
    <property type="project" value="TreeGrafter"/>
</dbReference>
<dbReference type="GO" id="GO:0052906">
    <property type="term" value="F:tRNA (guanine(37)-N1)-methyltransferase activity"/>
    <property type="evidence" value="ECO:0007669"/>
    <property type="project" value="UniProtKB-UniRule"/>
</dbReference>
<dbReference type="GO" id="GO:0002939">
    <property type="term" value="P:tRNA N1-guanine methylation"/>
    <property type="evidence" value="ECO:0007669"/>
    <property type="project" value="TreeGrafter"/>
</dbReference>
<dbReference type="CDD" id="cd18080">
    <property type="entry name" value="TrmD-like"/>
    <property type="match status" value="1"/>
</dbReference>
<dbReference type="FunFam" id="1.10.1270.20:FF:000004">
    <property type="entry name" value="tRNA (guanine-N(1)-)-methyltransferase"/>
    <property type="match status" value="1"/>
</dbReference>
<dbReference type="FunFam" id="3.40.1280.10:FF:000001">
    <property type="entry name" value="tRNA (guanine-N(1)-)-methyltransferase"/>
    <property type="match status" value="1"/>
</dbReference>
<dbReference type="Gene3D" id="3.40.1280.10">
    <property type="match status" value="1"/>
</dbReference>
<dbReference type="Gene3D" id="1.10.1270.20">
    <property type="entry name" value="tRNA(m1g37)methyltransferase, domain 2"/>
    <property type="match status" value="1"/>
</dbReference>
<dbReference type="HAMAP" id="MF_00605">
    <property type="entry name" value="TrmD"/>
    <property type="match status" value="1"/>
</dbReference>
<dbReference type="InterPro" id="IPR029028">
    <property type="entry name" value="Alpha/beta_knot_MTases"/>
</dbReference>
<dbReference type="InterPro" id="IPR023148">
    <property type="entry name" value="tRNA_m1G_MeTrfase_C_sf"/>
</dbReference>
<dbReference type="InterPro" id="IPR002649">
    <property type="entry name" value="tRNA_m1G_MeTrfase_TrmD"/>
</dbReference>
<dbReference type="InterPro" id="IPR029026">
    <property type="entry name" value="tRNA_m1G_MTases_N"/>
</dbReference>
<dbReference type="InterPro" id="IPR016009">
    <property type="entry name" value="tRNA_MeTrfase_TRMD/TRM10"/>
</dbReference>
<dbReference type="NCBIfam" id="NF000648">
    <property type="entry name" value="PRK00026.1"/>
    <property type="match status" value="1"/>
</dbReference>
<dbReference type="NCBIfam" id="TIGR00088">
    <property type="entry name" value="trmD"/>
    <property type="match status" value="1"/>
</dbReference>
<dbReference type="PANTHER" id="PTHR46417">
    <property type="entry name" value="TRNA (GUANINE-N(1)-)-METHYLTRANSFERASE"/>
    <property type="match status" value="1"/>
</dbReference>
<dbReference type="PANTHER" id="PTHR46417:SF1">
    <property type="entry name" value="TRNA (GUANINE-N(1)-)-METHYLTRANSFERASE"/>
    <property type="match status" value="1"/>
</dbReference>
<dbReference type="Pfam" id="PF01746">
    <property type="entry name" value="tRNA_m1G_MT"/>
    <property type="match status" value="1"/>
</dbReference>
<dbReference type="PIRSF" id="PIRSF000386">
    <property type="entry name" value="tRNA_mtase"/>
    <property type="match status" value="1"/>
</dbReference>
<dbReference type="SUPFAM" id="SSF75217">
    <property type="entry name" value="alpha/beta knot"/>
    <property type="match status" value="1"/>
</dbReference>